<organism>
    <name type="scientific">Dictyostelium discoideum</name>
    <name type="common">Social amoeba</name>
    <dbReference type="NCBI Taxonomy" id="44689"/>
    <lineage>
        <taxon>Eukaryota</taxon>
        <taxon>Amoebozoa</taxon>
        <taxon>Evosea</taxon>
        <taxon>Eumycetozoa</taxon>
        <taxon>Dictyostelia</taxon>
        <taxon>Dictyosteliales</taxon>
        <taxon>Dictyosteliaceae</taxon>
        <taxon>Dictyostelium</taxon>
    </lineage>
</organism>
<accession>Q54K71</accession>
<feature type="signal peptide" evidence="1">
    <location>
        <begin position="1"/>
        <end position="26"/>
    </location>
</feature>
<feature type="chain" id="PRO_0000312735" description="Spore germination protein 1/2/3-related protein">
    <location>
        <begin position="27"/>
        <end position="128"/>
    </location>
</feature>
<feature type="glycosylation site" description="N-linked (GlcNAc...) asparagine" evidence="1">
    <location>
        <position position="55"/>
    </location>
</feature>
<feature type="glycosylation site" description="N-linked (GlcNAc...) asparagine" evidence="1">
    <location>
        <position position="119"/>
    </location>
</feature>
<comment type="subcellular location">
    <subcellularLocation>
        <location evidence="2">Secreted</location>
    </subcellularLocation>
</comment>
<comment type="similarity">
    <text evidence="2">Belongs to the Dictyostelium gerABC family.</text>
</comment>
<sequence>MNIRNTLVLLVSTVLVLMSCSIGCYAGSPNCVGAPSGQVYIFSSWDFQGDRYVYNISQGQTTLPDSFIHNVQSFTSGSEICFASCNPLETYQISAGQSHRNYAALENFGQRMNLIIPGNCSNLVCPSN</sequence>
<proteinExistence type="inferred from homology"/>
<gene>
    <name type="ORF">DDB_G0287549</name>
</gene>
<reference key="1">
    <citation type="journal article" date="2005" name="Nature">
        <title>The genome of the social amoeba Dictyostelium discoideum.</title>
        <authorList>
            <person name="Eichinger L."/>
            <person name="Pachebat J.A."/>
            <person name="Gloeckner G."/>
            <person name="Rajandream M.A."/>
            <person name="Sucgang R."/>
            <person name="Berriman M."/>
            <person name="Song J."/>
            <person name="Olsen R."/>
            <person name="Szafranski K."/>
            <person name="Xu Q."/>
            <person name="Tunggal B."/>
            <person name="Kummerfeld S."/>
            <person name="Madera M."/>
            <person name="Konfortov B.A."/>
            <person name="Rivero F."/>
            <person name="Bankier A.T."/>
            <person name="Lehmann R."/>
            <person name="Hamlin N."/>
            <person name="Davies R."/>
            <person name="Gaudet P."/>
            <person name="Fey P."/>
            <person name="Pilcher K."/>
            <person name="Chen G."/>
            <person name="Saunders D."/>
            <person name="Sodergren E.J."/>
            <person name="Davis P."/>
            <person name="Kerhornou A."/>
            <person name="Nie X."/>
            <person name="Hall N."/>
            <person name="Anjard C."/>
            <person name="Hemphill L."/>
            <person name="Bason N."/>
            <person name="Farbrother P."/>
            <person name="Desany B."/>
            <person name="Just E."/>
            <person name="Morio T."/>
            <person name="Rost R."/>
            <person name="Churcher C.M."/>
            <person name="Cooper J."/>
            <person name="Haydock S."/>
            <person name="van Driessche N."/>
            <person name="Cronin A."/>
            <person name="Goodhead I."/>
            <person name="Muzny D.M."/>
            <person name="Mourier T."/>
            <person name="Pain A."/>
            <person name="Lu M."/>
            <person name="Harper D."/>
            <person name="Lindsay R."/>
            <person name="Hauser H."/>
            <person name="James K.D."/>
            <person name="Quiles M."/>
            <person name="Madan Babu M."/>
            <person name="Saito T."/>
            <person name="Buchrieser C."/>
            <person name="Wardroper A."/>
            <person name="Felder M."/>
            <person name="Thangavelu M."/>
            <person name="Johnson D."/>
            <person name="Knights A."/>
            <person name="Loulseged H."/>
            <person name="Mungall K.L."/>
            <person name="Oliver K."/>
            <person name="Price C."/>
            <person name="Quail M.A."/>
            <person name="Urushihara H."/>
            <person name="Hernandez J."/>
            <person name="Rabbinowitsch E."/>
            <person name="Steffen D."/>
            <person name="Sanders M."/>
            <person name="Ma J."/>
            <person name="Kohara Y."/>
            <person name="Sharp S."/>
            <person name="Simmonds M.N."/>
            <person name="Spiegler S."/>
            <person name="Tivey A."/>
            <person name="Sugano S."/>
            <person name="White B."/>
            <person name="Walker D."/>
            <person name="Woodward J.R."/>
            <person name="Winckler T."/>
            <person name="Tanaka Y."/>
            <person name="Shaulsky G."/>
            <person name="Schleicher M."/>
            <person name="Weinstock G.M."/>
            <person name="Rosenthal A."/>
            <person name="Cox E.C."/>
            <person name="Chisholm R.L."/>
            <person name="Gibbs R.A."/>
            <person name="Loomis W.F."/>
            <person name="Platzer M."/>
            <person name="Kay R.R."/>
            <person name="Williams J.G."/>
            <person name="Dear P.H."/>
            <person name="Noegel A.A."/>
            <person name="Barrell B.G."/>
            <person name="Kuspa A."/>
        </authorList>
    </citation>
    <scope>NUCLEOTIDE SEQUENCE [LARGE SCALE GENOMIC DNA]</scope>
    <source>
        <strain>AX4</strain>
    </source>
</reference>
<evidence type="ECO:0000255" key="1"/>
<evidence type="ECO:0000305" key="2"/>
<keyword id="KW-0325">Glycoprotein</keyword>
<keyword id="KW-1185">Reference proteome</keyword>
<keyword id="KW-0964">Secreted</keyword>
<keyword id="KW-0732">Signal</keyword>
<dbReference type="EMBL" id="AAFI02000102">
    <property type="protein sequence ID" value="EAL63674.1"/>
    <property type="molecule type" value="Genomic_DNA"/>
</dbReference>
<dbReference type="RefSeq" id="XP_637184.1">
    <property type="nucleotide sequence ID" value="XM_632092.1"/>
</dbReference>
<dbReference type="FunCoup" id="Q54K71">
    <property type="interactions" value="877"/>
</dbReference>
<dbReference type="GlyGen" id="Q54K71">
    <property type="glycosylation" value="2 sites"/>
</dbReference>
<dbReference type="PaxDb" id="44689-DDB0187525"/>
<dbReference type="EnsemblProtists" id="EAL63674">
    <property type="protein sequence ID" value="EAL63674"/>
    <property type="gene ID" value="DDB_G0287549"/>
</dbReference>
<dbReference type="GeneID" id="8626185"/>
<dbReference type="KEGG" id="ddi:DDB_G0287549"/>
<dbReference type="dictyBase" id="DDB_G0287549"/>
<dbReference type="VEuPathDB" id="AmoebaDB:DDB_G0287549"/>
<dbReference type="eggNOG" id="ENOG502RI0A">
    <property type="taxonomic scope" value="Eukaryota"/>
</dbReference>
<dbReference type="HOGENOM" id="CLU_1974670_0_0_1"/>
<dbReference type="InParanoid" id="Q54K71"/>
<dbReference type="OMA" id="RISANCI"/>
<dbReference type="PhylomeDB" id="Q54K71"/>
<dbReference type="PRO" id="PR:Q54K71"/>
<dbReference type="Proteomes" id="UP000002195">
    <property type="component" value="Chromosome 5"/>
</dbReference>
<dbReference type="GO" id="GO:0005576">
    <property type="term" value="C:extracellular region"/>
    <property type="evidence" value="ECO:0007669"/>
    <property type="project" value="UniProtKB-SubCell"/>
</dbReference>
<name>SPGX_DICDI</name>
<protein>
    <recommendedName>
        <fullName>Spore germination protein 1/2/3-related protein</fullName>
    </recommendedName>
</protein>